<name>TBX12_CAEEL</name>
<keyword id="KW-0217">Developmental protein</keyword>
<keyword id="KW-0238">DNA-binding</keyword>
<keyword id="KW-0539">Nucleus</keyword>
<keyword id="KW-1185">Reference proteome</keyword>
<keyword id="KW-0804">Transcription</keyword>
<keyword id="KW-0805">Transcription regulation</keyword>
<accession>P90971</accession>
<accession>O17276</accession>
<reference key="1">
    <citation type="journal article" date="1997" name="Genome">
        <title>Three novel T-box genes in Caenorhabditis elegans.</title>
        <authorList>
            <person name="Agulnik S.I."/>
            <person name="Ruvinsky I."/>
            <person name="Silver L.M."/>
        </authorList>
    </citation>
    <scope>NUCLEOTIDE SEQUENCE [MRNA]</scope>
</reference>
<reference key="2">
    <citation type="journal article" date="2000" name="Genes Dev.">
        <title>The Caenorhabditis elegans fate-determining gene mab-9 encodes a T-box protein required to pattern the posterior hindgut.</title>
        <authorList>
            <person name="Woollard A."/>
            <person name="Hodgkin J."/>
        </authorList>
    </citation>
    <scope>NUCLEOTIDE SEQUENCE [MRNA]</scope>
    <scope>FUNCTION</scope>
    <scope>SUBCELLULAR LOCATION</scope>
    <scope>DEVELOPMENTAL STAGE</scope>
    <scope>DISRUPTION PHENOTYPE</scope>
    <source>
        <strain>Bristol N2</strain>
    </source>
</reference>
<reference key="3">
    <citation type="journal article" date="1998" name="Science">
        <title>Genome sequence of the nematode C. elegans: a platform for investigating biology.</title>
        <authorList>
            <consortium name="The C. elegans sequencing consortium"/>
        </authorList>
    </citation>
    <scope>NUCLEOTIDE SEQUENCE [LARGE SCALE GENOMIC DNA]</scope>
    <source>
        <strain>Bristol N2</strain>
    </source>
</reference>
<reference key="4">
    <citation type="journal article" date="2017" name="Neuron">
        <title>Diversification of C. elegans Motor Neuron Identity via Selective Effector Gene Repression.</title>
        <authorList>
            <person name="Kerk S.Y."/>
            <person name="Kratsios P."/>
            <person name="Hart M."/>
            <person name="Mourao R."/>
            <person name="Hobert O."/>
        </authorList>
    </citation>
    <scope>FUNCTION</scope>
    <scope>MUTAGENESIS OF GLY-103</scope>
</reference>
<comment type="function">
    <text evidence="3 4">Transcription factor (PubMed:28056346). Involved in cell fate determination; required to pattern the posterior hindgut (PubMed:10716947). Involved in motor neuron fate determination and maintenance, acting as a transcriptional repressor to counteract gene activation by transcription factor unc-3 in a subset of motor neurons (PubMed:28056346). Required throughout development to repress transcription by unc-3, probably acting by binding to specific promoter elements (PubMed:28056346). Represses expression of VA and VB motor neuron-specific effector genes, such as DEG/ENaC channel del-1 and the innexin inx-12, in DA and DB motor neurons (PubMed:28056346). Represses expression of transcription factor bnc-1, perhaps acting directly, in DA and DB motor neurons (PubMed:28056346).</text>
</comment>
<comment type="subcellular location">
    <subcellularLocation>
        <location evidence="1 3">Nucleus</location>
    </subcellularLocation>
</comment>
<comment type="developmental stage">
    <text evidence="3">First expressed during embryogenesis at the 1.5-fold stage, and in very few cells throughout development (PubMed:10716947). Expressed in L1 larvae in the posterior hindgut cells B and F and in later L1 stage in the B daughter cells B.a and B.p (PubMed:10716947). Also expressed in two posterior hypodermal nuclei of the large syncytial cell hyp7 and in the nervous system in two neurons of the lumbar ganglion (PubMed:10716947).</text>
</comment>
<comment type="disruption phenotype">
    <text evidence="3">RNAi-mediated knockdown by injection into the gonad results in male progeny with grossly abnormal tails with no spicules (PubMed:10716947). Hermaphrodite progeny are constipated and show backward uncoordination (PubMed:10716947).</text>
</comment>
<evidence type="ECO:0000255" key="1">
    <source>
        <dbReference type="PROSITE-ProRule" id="PRU00201"/>
    </source>
</evidence>
<evidence type="ECO:0000256" key="2">
    <source>
        <dbReference type="SAM" id="MobiDB-lite"/>
    </source>
</evidence>
<evidence type="ECO:0000269" key="3">
    <source>
    </source>
</evidence>
<evidence type="ECO:0000269" key="4">
    <source>
    </source>
</evidence>
<evidence type="ECO:0000305" key="5"/>
<protein>
    <recommendedName>
        <fullName>T-box protein 12</fullName>
    </recommendedName>
    <alternativeName>
        <fullName>Protein male abnormal 9</fullName>
    </alternativeName>
</protein>
<organism>
    <name type="scientific">Caenorhabditis elegans</name>
    <dbReference type="NCBI Taxonomy" id="6239"/>
    <lineage>
        <taxon>Eukaryota</taxon>
        <taxon>Metazoa</taxon>
        <taxon>Ecdysozoa</taxon>
        <taxon>Nematoda</taxon>
        <taxon>Chromadorea</taxon>
        <taxon>Rhabditida</taxon>
        <taxon>Rhabditina</taxon>
        <taxon>Rhabditomorpha</taxon>
        <taxon>Rhabditoidea</taxon>
        <taxon>Rhabditidae</taxon>
        <taxon>Peloderinae</taxon>
        <taxon>Caenorhabditis</taxon>
    </lineage>
</organism>
<dbReference type="EMBL" id="U56081">
    <property type="protein sequence ID" value="AAB37243.1"/>
    <property type="molecule type" value="mRNA"/>
</dbReference>
<dbReference type="EMBL" id="AJ252168">
    <property type="protein sequence ID" value="CAB65731.1"/>
    <property type="molecule type" value="mRNA"/>
</dbReference>
<dbReference type="EMBL" id="FO081751">
    <property type="protein sequence ID" value="CCD73630.1"/>
    <property type="molecule type" value="Genomic_DNA"/>
</dbReference>
<dbReference type="PIR" id="A88023">
    <property type="entry name" value="A88023"/>
</dbReference>
<dbReference type="RefSeq" id="NP_493750.1">
    <property type="nucleotide sequence ID" value="NM_061349.9"/>
</dbReference>
<dbReference type="SMR" id="P90971"/>
<dbReference type="BioGRID" id="38818">
    <property type="interactions" value="3"/>
</dbReference>
<dbReference type="FunCoup" id="P90971">
    <property type="interactions" value="259"/>
</dbReference>
<dbReference type="IntAct" id="P90971">
    <property type="interactions" value="3"/>
</dbReference>
<dbReference type="STRING" id="6239.T27A1.6.1"/>
<dbReference type="PaxDb" id="6239-T27A1.6"/>
<dbReference type="EnsemblMetazoa" id="T27A1.6.1">
    <property type="protein sequence ID" value="T27A1.6.1"/>
    <property type="gene ID" value="WBGene00003106"/>
</dbReference>
<dbReference type="GeneID" id="173441"/>
<dbReference type="KEGG" id="cel:CELE_T27A1.6"/>
<dbReference type="UCSC" id="T27A1.6">
    <property type="organism name" value="c. elegans"/>
</dbReference>
<dbReference type="AGR" id="WB:WBGene00003106"/>
<dbReference type="CTD" id="173441"/>
<dbReference type="WormBase" id="T27A1.6">
    <property type="protein sequence ID" value="CE24016"/>
    <property type="gene ID" value="WBGene00003106"/>
    <property type="gene designation" value="mab-9"/>
</dbReference>
<dbReference type="eggNOG" id="KOG3586">
    <property type="taxonomic scope" value="Eukaryota"/>
</dbReference>
<dbReference type="GeneTree" id="ENSGT00940000168440"/>
<dbReference type="HOGENOM" id="CLU_014430_2_0_1"/>
<dbReference type="InParanoid" id="P90971"/>
<dbReference type="OMA" id="IQQAMFQ"/>
<dbReference type="OrthoDB" id="7442607at2759"/>
<dbReference type="PhylomeDB" id="P90971"/>
<dbReference type="SignaLink" id="P90971"/>
<dbReference type="PRO" id="PR:P90971"/>
<dbReference type="Proteomes" id="UP000001940">
    <property type="component" value="Chromosome II"/>
</dbReference>
<dbReference type="Bgee" id="WBGene00003106">
    <property type="expression patterns" value="Expressed in larva and 3 other cell types or tissues"/>
</dbReference>
<dbReference type="GO" id="GO:0000785">
    <property type="term" value="C:chromatin"/>
    <property type="evidence" value="ECO:0000318"/>
    <property type="project" value="GO_Central"/>
</dbReference>
<dbReference type="GO" id="GO:0005634">
    <property type="term" value="C:nucleus"/>
    <property type="evidence" value="ECO:0000314"/>
    <property type="project" value="WormBase"/>
</dbReference>
<dbReference type="GO" id="GO:0000981">
    <property type="term" value="F:DNA-binding transcription factor activity, RNA polymerase II-specific"/>
    <property type="evidence" value="ECO:0000318"/>
    <property type="project" value="GO_Central"/>
</dbReference>
<dbReference type="GO" id="GO:0000978">
    <property type="term" value="F:RNA polymerase II cis-regulatory region sequence-specific DNA binding"/>
    <property type="evidence" value="ECO:0000318"/>
    <property type="project" value="GO_Central"/>
</dbReference>
<dbReference type="GO" id="GO:0001708">
    <property type="term" value="P:cell fate specification"/>
    <property type="evidence" value="ECO:0000315"/>
    <property type="project" value="UniProtKB"/>
</dbReference>
<dbReference type="GO" id="GO:0007507">
    <property type="term" value="P:heart development"/>
    <property type="evidence" value="ECO:0000318"/>
    <property type="project" value="GO_Central"/>
</dbReference>
<dbReference type="GO" id="GO:0040011">
    <property type="term" value="P:locomotion"/>
    <property type="evidence" value="ECO:0000315"/>
    <property type="project" value="WormBase"/>
</dbReference>
<dbReference type="GO" id="GO:0000122">
    <property type="term" value="P:negative regulation of transcription by RNA polymerase II"/>
    <property type="evidence" value="ECO:0000315"/>
    <property type="project" value="UniProtKB"/>
</dbReference>
<dbReference type="GO" id="GO:0045138">
    <property type="term" value="P:nematode male tail tip morphogenesis"/>
    <property type="evidence" value="ECO:0000315"/>
    <property type="project" value="WormBase"/>
</dbReference>
<dbReference type="GO" id="GO:0045893">
    <property type="term" value="P:positive regulation of DNA-templated transcription"/>
    <property type="evidence" value="ECO:0007669"/>
    <property type="project" value="InterPro"/>
</dbReference>
<dbReference type="GO" id="GO:0048620">
    <property type="term" value="P:post-embryonic hindgut morphogenesis"/>
    <property type="evidence" value="ECO:0000315"/>
    <property type="project" value="WormBase"/>
</dbReference>
<dbReference type="GO" id="GO:0006357">
    <property type="term" value="P:regulation of transcription by RNA polymerase II"/>
    <property type="evidence" value="ECO:0000318"/>
    <property type="project" value="GO_Central"/>
</dbReference>
<dbReference type="FunFam" id="2.60.40.820:FF:000008">
    <property type="entry name" value="T-box transcription factor TBX20"/>
    <property type="match status" value="1"/>
</dbReference>
<dbReference type="Gene3D" id="2.60.40.820">
    <property type="entry name" value="Transcription factor, T-box"/>
    <property type="match status" value="1"/>
</dbReference>
<dbReference type="InterPro" id="IPR008967">
    <property type="entry name" value="p53-like_TF_DNA-bd_sf"/>
</dbReference>
<dbReference type="InterPro" id="IPR046360">
    <property type="entry name" value="T-box_DNA-bd"/>
</dbReference>
<dbReference type="InterPro" id="IPR036960">
    <property type="entry name" value="T-box_sf"/>
</dbReference>
<dbReference type="InterPro" id="IPR001699">
    <property type="entry name" value="TF_T-box"/>
</dbReference>
<dbReference type="InterPro" id="IPR018186">
    <property type="entry name" value="TF_T-box_CS"/>
</dbReference>
<dbReference type="PANTHER" id="PTHR11267">
    <property type="entry name" value="T-BOX PROTEIN-RELATED"/>
    <property type="match status" value="1"/>
</dbReference>
<dbReference type="PANTHER" id="PTHR11267:SF190">
    <property type="entry name" value="T-BOX TRANSCRIPTION FACTOR TBX20"/>
    <property type="match status" value="1"/>
</dbReference>
<dbReference type="Pfam" id="PF00907">
    <property type="entry name" value="T-box"/>
    <property type="match status" value="1"/>
</dbReference>
<dbReference type="PRINTS" id="PR00937">
    <property type="entry name" value="TBOX"/>
</dbReference>
<dbReference type="SMART" id="SM00425">
    <property type="entry name" value="TBOX"/>
    <property type="match status" value="1"/>
</dbReference>
<dbReference type="SUPFAM" id="SSF49417">
    <property type="entry name" value="p53-like transcription factors"/>
    <property type="match status" value="1"/>
</dbReference>
<dbReference type="PROSITE" id="PS01283">
    <property type="entry name" value="TBOX_1"/>
    <property type="match status" value="1"/>
</dbReference>
<dbReference type="PROSITE" id="PS01264">
    <property type="entry name" value="TBOX_2"/>
    <property type="match status" value="1"/>
</dbReference>
<dbReference type="PROSITE" id="PS50252">
    <property type="entry name" value="TBOX_3"/>
    <property type="match status" value="1"/>
</dbReference>
<feature type="chain" id="PRO_0000184474" description="T-box protein 12">
    <location>
        <begin position="1"/>
        <end position="346"/>
    </location>
</feature>
<feature type="DNA-binding region" description="T-box" evidence="1">
    <location>
        <begin position="86"/>
        <end position="268"/>
    </location>
</feature>
<feature type="region of interest" description="Disordered" evidence="2">
    <location>
        <begin position="33"/>
        <end position="66"/>
    </location>
</feature>
<feature type="compositionally biased region" description="Acidic residues" evidence="2">
    <location>
        <begin position="33"/>
        <end position="48"/>
    </location>
</feature>
<feature type="mutagenesis site" description="In ot720; abolishes unc-129 expression in DA and DB motor neurons. Causes ectopic expression of transcription factor bnc-1 in DA and DB motor neurons." evidence="4">
    <original>G</original>
    <variation>R</variation>
    <location>
        <position position="103"/>
    </location>
</feature>
<feature type="sequence conflict" description="In Ref. 1; AAB37243." evidence="5" ref="1">
    <original>Q</original>
    <variation>R</variation>
    <location>
        <position position="296"/>
    </location>
</feature>
<feature type="sequence conflict" description="In Ref. 1; AAB37243." evidence="5" ref="1">
    <original>A</original>
    <variation>G</variation>
    <location>
        <position position="331"/>
    </location>
</feature>
<gene>
    <name type="primary">mab-9</name>
    <name type="synonym">tbx-12</name>
    <name type="ORF">T27A1.6</name>
</gene>
<sequence length="346" mass="39435">MSKRCASDRDDKDSEPVKKPRFSIANILDEVEDEEDVEVDVEDVDDVDLSSIPSKSPERSRGRPKIGLKMKEGNLPIECKLEGSELWAKFFDLGTEMIITKSGRRMFPTVKVSFTNVILDALYYIFLDVVPVDSKRYRYIYNKSAWLTAGKAEPVPKNRYYLHPDSPFTGDQLLKHVISFEKTKLTNNEVDKTGHLILNSMHKYQPRIHIVQRQKANPLDPNKVVMSEEKHCTYTFPETQFMAVTAYQNQLITKLKIEKNPFAKGFRDPTGRSPDEMERSPGDMMLSNFYHSSALQQAMFQQCLSKTLQLNPSIMMLYQNVFPTGNSLPAAPTVPGNPAEISIKSE</sequence>
<proteinExistence type="evidence at protein level"/>